<name>TXJ06_LYCSI</name>
<comment type="subcellular location">
    <subcellularLocation>
        <location evidence="5">Secreted</location>
    </subcellularLocation>
</comment>
<comment type="tissue specificity">
    <text evidence="5">Expressed by the venom gland.</text>
</comment>
<comment type="domain">
    <text evidence="2">The presence of a 'disulfide through disulfide knot' structurally defines this protein as a knottin.</text>
</comment>
<comment type="similarity">
    <text evidence="4">Belongs to the neurotoxin 02 (plectoxin) family. 05 (U19-lycotoxin) subfamily.</text>
</comment>
<feature type="signal peptide" evidence="3">
    <location>
        <begin position="1"/>
        <end position="22"/>
    </location>
</feature>
<feature type="propeptide" id="PRO_0000401905" evidence="1">
    <location>
        <begin position="23"/>
        <end position="34"/>
    </location>
</feature>
<feature type="chain" id="PRO_0000401906" description="U19-lycotoxin-Ls1a">
    <location>
        <begin position="35"/>
        <end position="80"/>
    </location>
</feature>
<feature type="disulfide bond" evidence="2">
    <location>
        <begin position="36"/>
        <end position="50"/>
    </location>
</feature>
<feature type="disulfide bond" evidence="2">
    <location>
        <begin position="43"/>
        <end position="55"/>
    </location>
</feature>
<feature type="disulfide bond" evidence="2">
    <location>
        <begin position="49"/>
        <end position="66"/>
    </location>
</feature>
<feature type="disulfide bond" evidence="2">
    <location>
        <begin position="57"/>
        <end position="64"/>
    </location>
</feature>
<protein>
    <recommendedName>
        <fullName evidence="4">U19-lycotoxin-Ls1a</fullName>
        <shortName evidence="4">U19-LCTX-Ls1a</shortName>
    </recommendedName>
    <alternativeName>
        <fullName>Toxin-like structure LSTX-P6</fullName>
    </alternativeName>
</protein>
<organism>
    <name type="scientific">Lycosa singoriensis</name>
    <name type="common">Wolf spider</name>
    <name type="synonym">Aranea singoriensis</name>
    <dbReference type="NCBI Taxonomy" id="434756"/>
    <lineage>
        <taxon>Eukaryota</taxon>
        <taxon>Metazoa</taxon>
        <taxon>Ecdysozoa</taxon>
        <taxon>Arthropoda</taxon>
        <taxon>Chelicerata</taxon>
        <taxon>Arachnida</taxon>
        <taxon>Araneae</taxon>
        <taxon>Araneomorphae</taxon>
        <taxon>Entelegynae</taxon>
        <taxon>Lycosoidea</taxon>
        <taxon>Lycosidae</taxon>
        <taxon>Lycosa</taxon>
    </lineage>
</organism>
<proteinExistence type="inferred from homology"/>
<dbReference type="EMBL" id="EU926141">
    <property type="protein sequence ID" value="ACI41473.1"/>
    <property type="molecule type" value="mRNA"/>
</dbReference>
<dbReference type="EMBL" id="FM864145">
    <property type="protein sequence ID" value="CAS03742.1"/>
    <property type="molecule type" value="mRNA"/>
</dbReference>
<dbReference type="SMR" id="B6DD57"/>
<dbReference type="ArachnoServer" id="AS001079">
    <property type="toxin name" value="U19-lycotoxin-Ls1a"/>
</dbReference>
<dbReference type="GO" id="GO:0005576">
    <property type="term" value="C:extracellular region"/>
    <property type="evidence" value="ECO:0007669"/>
    <property type="project" value="UniProtKB-SubCell"/>
</dbReference>
<dbReference type="GO" id="GO:0008200">
    <property type="term" value="F:ion channel inhibitor activity"/>
    <property type="evidence" value="ECO:0007669"/>
    <property type="project" value="InterPro"/>
</dbReference>
<dbReference type="GO" id="GO:0090729">
    <property type="term" value="F:toxin activity"/>
    <property type="evidence" value="ECO:0007669"/>
    <property type="project" value="UniProtKB-KW"/>
</dbReference>
<dbReference type="CDD" id="cd12960">
    <property type="entry name" value="Spider_toxin"/>
    <property type="match status" value="1"/>
</dbReference>
<dbReference type="Gene3D" id="4.10.40.10">
    <property type="match status" value="1"/>
</dbReference>
<dbReference type="InterPro" id="IPR004169">
    <property type="entry name" value="Spidertoxin"/>
</dbReference>
<dbReference type="Pfam" id="PF02819">
    <property type="entry name" value="Toxin_9"/>
    <property type="match status" value="1"/>
</dbReference>
<dbReference type="SUPFAM" id="SSF57059">
    <property type="entry name" value="omega toxin-like"/>
    <property type="match status" value="1"/>
</dbReference>
<accession>B6DD57</accession>
<keyword id="KW-1015">Disulfide bond</keyword>
<keyword id="KW-0960">Knottin</keyword>
<keyword id="KW-0964">Secreted</keyword>
<keyword id="KW-0732">Signal</keyword>
<keyword id="KW-0800">Toxin</keyword>
<sequence length="80" mass="8933">MSPKVQALIFIVGLITLLAAHAQEELSDNTESERGCSGAYKRCSSSQRCCEGRPCVCSAINSNCKCRKTYTELFKEYFEK</sequence>
<reference key="1">
    <citation type="journal article" date="2010" name="Zoology">
        <title>Transcriptome analysis of the venom glands of the Chinese wolf spider Lycosa singoriensis.</title>
        <authorList>
            <person name="Zhang Y."/>
            <person name="Chen J."/>
            <person name="Tang X."/>
            <person name="Wang F."/>
            <person name="Jiang L."/>
            <person name="Xiong X."/>
            <person name="Wang M."/>
            <person name="Rong M."/>
            <person name="Liu Z."/>
            <person name="Liang S."/>
        </authorList>
    </citation>
    <scope>NUCLEOTIDE SEQUENCE [LARGE SCALE MRNA]</scope>
    <source>
        <tissue>Venom gland</tissue>
    </source>
</reference>
<evidence type="ECO:0000250" key="1"/>
<evidence type="ECO:0000250" key="2">
    <source>
        <dbReference type="UniProtKB" id="P30288"/>
    </source>
</evidence>
<evidence type="ECO:0000255" key="3"/>
<evidence type="ECO:0000305" key="4"/>
<evidence type="ECO:0000305" key="5">
    <source>
    </source>
</evidence>